<evidence type="ECO:0000250" key="1"/>
<evidence type="ECO:0000255" key="2"/>
<evidence type="ECO:0000305" key="3"/>
<protein>
    <recommendedName>
        <fullName>NADH-ubiquinone oxidoreductase chain 4</fullName>
        <ecNumber>7.1.1.2</ecNumber>
    </recommendedName>
    <alternativeName>
        <fullName>NADH dehydrogenase subunit 4</fullName>
    </alternativeName>
</protein>
<comment type="function">
    <text evidence="1">Core subunit of the mitochondrial membrane respiratory chain NADH dehydrogenase (Complex I) that is believed to belong to the minimal assembly required for catalysis. Complex I functions in the transfer of electrons from NADH to the respiratory chain. The immediate electron acceptor for the enzyme is believed to be ubiquinone (By similarity).</text>
</comment>
<comment type="catalytic activity">
    <reaction>
        <text>a ubiquinone + NADH + 5 H(+)(in) = a ubiquinol + NAD(+) + 4 H(+)(out)</text>
        <dbReference type="Rhea" id="RHEA:29091"/>
        <dbReference type="Rhea" id="RHEA-COMP:9565"/>
        <dbReference type="Rhea" id="RHEA-COMP:9566"/>
        <dbReference type="ChEBI" id="CHEBI:15378"/>
        <dbReference type="ChEBI" id="CHEBI:16389"/>
        <dbReference type="ChEBI" id="CHEBI:17976"/>
        <dbReference type="ChEBI" id="CHEBI:57540"/>
        <dbReference type="ChEBI" id="CHEBI:57945"/>
        <dbReference type="EC" id="7.1.1.2"/>
    </reaction>
</comment>
<comment type="subcellular location">
    <subcellularLocation>
        <location evidence="1">Mitochondrion membrane</location>
        <topology evidence="1">Multi-pass membrane protein</topology>
    </subcellularLocation>
</comment>
<comment type="similarity">
    <text evidence="3">Belongs to the complex I subunit 4 family.</text>
</comment>
<accession>P92613</accession>
<dbReference type="EC" id="7.1.1.2"/>
<dbReference type="EMBL" id="U41878">
    <property type="protein sequence ID" value="AAC27820.1"/>
    <property type="molecule type" value="Genomic_DNA"/>
</dbReference>
<dbReference type="SMR" id="P92613"/>
<dbReference type="GO" id="GO:0031966">
    <property type="term" value="C:mitochondrial membrane"/>
    <property type="evidence" value="ECO:0007669"/>
    <property type="project" value="UniProtKB-SubCell"/>
</dbReference>
<dbReference type="GO" id="GO:0008137">
    <property type="term" value="F:NADH dehydrogenase (ubiquinone) activity"/>
    <property type="evidence" value="ECO:0007669"/>
    <property type="project" value="UniProtKB-EC"/>
</dbReference>
<dbReference type="GO" id="GO:0048039">
    <property type="term" value="F:ubiquinone binding"/>
    <property type="evidence" value="ECO:0007669"/>
    <property type="project" value="TreeGrafter"/>
</dbReference>
<dbReference type="GO" id="GO:0042773">
    <property type="term" value="P:ATP synthesis coupled electron transport"/>
    <property type="evidence" value="ECO:0007669"/>
    <property type="project" value="InterPro"/>
</dbReference>
<dbReference type="GO" id="GO:0015990">
    <property type="term" value="P:electron transport coupled proton transport"/>
    <property type="evidence" value="ECO:0007669"/>
    <property type="project" value="TreeGrafter"/>
</dbReference>
<dbReference type="InterPro" id="IPR003918">
    <property type="entry name" value="NADH_UbQ_OxRdtase"/>
</dbReference>
<dbReference type="InterPro" id="IPR001750">
    <property type="entry name" value="ND/Mrp_TM"/>
</dbReference>
<dbReference type="PANTHER" id="PTHR43507">
    <property type="entry name" value="NADH-UBIQUINONE OXIDOREDUCTASE CHAIN 4"/>
    <property type="match status" value="1"/>
</dbReference>
<dbReference type="PANTHER" id="PTHR43507:SF20">
    <property type="entry name" value="NADH-UBIQUINONE OXIDOREDUCTASE CHAIN 4"/>
    <property type="match status" value="1"/>
</dbReference>
<dbReference type="Pfam" id="PF00361">
    <property type="entry name" value="Proton_antipo_M"/>
    <property type="match status" value="1"/>
</dbReference>
<keyword id="KW-0249">Electron transport</keyword>
<keyword id="KW-0472">Membrane</keyword>
<keyword id="KW-0496">Mitochondrion</keyword>
<keyword id="KW-0520">NAD</keyword>
<keyword id="KW-0679">Respiratory chain</keyword>
<keyword id="KW-1278">Translocase</keyword>
<keyword id="KW-0812">Transmembrane</keyword>
<keyword id="KW-1133">Transmembrane helix</keyword>
<keyword id="KW-0813">Transport</keyword>
<keyword id="KW-0830">Ubiquinone</keyword>
<feature type="chain" id="PRO_0000117883" description="NADH-ubiquinone oxidoreductase chain 4">
    <location>
        <begin position="1" status="less than"/>
        <end position="231" status="greater than"/>
    </location>
</feature>
<feature type="transmembrane region" description="Helical" evidence="2">
    <location>
        <begin position="1"/>
        <end position="21"/>
    </location>
</feature>
<feature type="transmembrane region" description="Helical" evidence="2">
    <location>
        <begin position="34"/>
        <end position="54"/>
    </location>
</feature>
<feature type="transmembrane region" description="Helical" evidence="2">
    <location>
        <begin position="63"/>
        <end position="85"/>
    </location>
</feature>
<feature type="transmembrane region" description="Helical" evidence="2">
    <location>
        <begin position="89"/>
        <end position="111"/>
    </location>
</feature>
<feature type="transmembrane region" description="Helical" evidence="2">
    <location>
        <begin position="118"/>
        <end position="138"/>
    </location>
</feature>
<feature type="transmembrane region" description="Helical" evidence="2">
    <location>
        <begin position="156"/>
        <end position="176"/>
    </location>
</feature>
<feature type="non-terminal residue">
    <location>
        <position position="1"/>
    </location>
</feature>
<feature type="non-terminal residue">
    <location>
        <position position="231"/>
    </location>
</feature>
<organism>
    <name type="scientific">Calloselasma rhodostoma</name>
    <name type="common">Malayan pit viper</name>
    <name type="synonym">Agkistrodon rhodostoma</name>
    <dbReference type="NCBI Taxonomy" id="8717"/>
    <lineage>
        <taxon>Eukaryota</taxon>
        <taxon>Metazoa</taxon>
        <taxon>Chordata</taxon>
        <taxon>Craniata</taxon>
        <taxon>Vertebrata</taxon>
        <taxon>Euteleostomi</taxon>
        <taxon>Lepidosauria</taxon>
        <taxon>Squamata</taxon>
        <taxon>Bifurcata</taxon>
        <taxon>Unidentata</taxon>
        <taxon>Episquamata</taxon>
        <taxon>Toxicofera</taxon>
        <taxon>Serpentes</taxon>
        <taxon>Colubroidea</taxon>
        <taxon>Viperidae</taxon>
        <taxon>Crotalinae</taxon>
        <taxon>Calloselasma</taxon>
    </lineage>
</organism>
<reference key="1">
    <citation type="journal article" date="1996" name="Copeia">
        <title>Crotaline intergeneric relationships based on mitochondrial DNA sequence data.</title>
        <authorList>
            <person name="Kraus F."/>
            <person name="Mink D.G."/>
            <person name="Brown W.M."/>
        </authorList>
    </citation>
    <scope>NUCLEOTIDE SEQUENCE [GENOMIC DNA]</scope>
</reference>
<gene>
    <name type="primary">MT-ND4</name>
    <name type="synonym">MTND4</name>
    <name type="synonym">NADH4</name>
    <name type="synonym">ND4</name>
</gene>
<proteinExistence type="inferred from homology"/>
<geneLocation type="mitochondrion"/>
<sequence>PIAGSMVLAAILLKLGGYGIIRMMQIMPTTKTDMFLPLVVLALWGAVLANLTCLQQTDLKSLIAYSSISHMGLVAAAIIIQTPWGLSGGMTLMIAHGFTSSALFCLANTTYERTHTRILILTRGFHNILPMATTWWLLTNLMNIATPPTTNFTSELLIMSALFNWCPTTIIMLGLSMLITASYSLHMFLSTQMGPPPSNNLTEPSHSREHLLMILHIMPLLMISLKSELII</sequence>
<name>NU4M_CALRH</name>